<name>CBIT_SACS2</name>
<evidence type="ECO:0000255" key="1">
    <source>
        <dbReference type="HAMAP-Rule" id="MF_00786"/>
    </source>
</evidence>
<accession>Q97WC7</accession>
<organism>
    <name type="scientific">Saccharolobus solfataricus (strain ATCC 35092 / DSM 1617 / JCM 11322 / P2)</name>
    <name type="common">Sulfolobus solfataricus</name>
    <dbReference type="NCBI Taxonomy" id="273057"/>
    <lineage>
        <taxon>Archaea</taxon>
        <taxon>Thermoproteota</taxon>
        <taxon>Thermoprotei</taxon>
        <taxon>Sulfolobales</taxon>
        <taxon>Sulfolobaceae</taxon>
        <taxon>Saccharolobus</taxon>
    </lineage>
</organism>
<feature type="chain" id="PRO_0000134944" description="Probable cobalt-precorrin-6B C(15)-methyltransferase (decarboxylating)">
    <location>
        <begin position="1"/>
        <end position="199"/>
    </location>
</feature>
<feature type="binding site" evidence="1">
    <location>
        <position position="24"/>
    </location>
    <ligand>
        <name>S-adenosyl-L-methionine</name>
        <dbReference type="ChEBI" id="CHEBI:59789"/>
    </ligand>
</feature>
<feature type="binding site" evidence="1">
    <location>
        <begin position="48"/>
        <end position="52"/>
    </location>
    <ligand>
        <name>S-adenosyl-L-methionine</name>
        <dbReference type="ChEBI" id="CHEBI:59789"/>
    </ligand>
</feature>
<feature type="binding site" evidence="1">
    <location>
        <position position="72"/>
    </location>
    <ligand>
        <name>S-adenosyl-L-methionine</name>
        <dbReference type="ChEBI" id="CHEBI:59789"/>
    </ligand>
</feature>
<feature type="binding site" evidence="1">
    <location>
        <position position="101"/>
    </location>
    <ligand>
        <name>S-adenosyl-L-methionine</name>
        <dbReference type="ChEBI" id="CHEBI:59789"/>
    </ligand>
</feature>
<proteinExistence type="inferred from homology"/>
<gene>
    <name evidence="1" type="primary">cbiT</name>
    <name type="ordered locus">SSO2303</name>
</gene>
<reference key="1">
    <citation type="journal article" date="2001" name="Proc. Natl. Acad. Sci. U.S.A.">
        <title>The complete genome of the crenarchaeon Sulfolobus solfataricus P2.</title>
        <authorList>
            <person name="She Q."/>
            <person name="Singh R.K."/>
            <person name="Confalonieri F."/>
            <person name="Zivanovic Y."/>
            <person name="Allard G."/>
            <person name="Awayez M.J."/>
            <person name="Chan-Weiher C.C.-Y."/>
            <person name="Clausen I.G."/>
            <person name="Curtis B.A."/>
            <person name="De Moors A."/>
            <person name="Erauso G."/>
            <person name="Fletcher C."/>
            <person name="Gordon P.M.K."/>
            <person name="Heikamp-de Jong I."/>
            <person name="Jeffries A.C."/>
            <person name="Kozera C.J."/>
            <person name="Medina N."/>
            <person name="Peng X."/>
            <person name="Thi-Ngoc H.P."/>
            <person name="Redder P."/>
            <person name="Schenk M.E."/>
            <person name="Theriault C."/>
            <person name="Tolstrup N."/>
            <person name="Charlebois R.L."/>
            <person name="Doolittle W.F."/>
            <person name="Duguet M."/>
            <person name="Gaasterland T."/>
            <person name="Garrett R.A."/>
            <person name="Ragan M.A."/>
            <person name="Sensen C.W."/>
            <person name="Van der Oost J."/>
        </authorList>
    </citation>
    <scope>NUCLEOTIDE SEQUENCE [LARGE SCALE GENOMIC DNA]</scope>
    <source>
        <strain>ATCC 35092 / DSM 1617 / JCM 11322 / P2</strain>
    </source>
</reference>
<dbReference type="EC" id="2.1.1.196" evidence="1"/>
<dbReference type="EMBL" id="AE006641">
    <property type="protein sequence ID" value="AAK42461.1"/>
    <property type="molecule type" value="Genomic_DNA"/>
</dbReference>
<dbReference type="PIR" id="F90400">
    <property type="entry name" value="F90400"/>
</dbReference>
<dbReference type="RefSeq" id="WP_009991808.1">
    <property type="nucleotide sequence ID" value="NC_002754.1"/>
</dbReference>
<dbReference type="SMR" id="Q97WC7"/>
<dbReference type="FunCoup" id="Q97WC7">
    <property type="interactions" value="100"/>
</dbReference>
<dbReference type="STRING" id="273057.SSO2303"/>
<dbReference type="PaxDb" id="273057-SSO2303"/>
<dbReference type="EnsemblBacteria" id="AAK42461">
    <property type="protein sequence ID" value="AAK42461"/>
    <property type="gene ID" value="SSO2303"/>
</dbReference>
<dbReference type="GeneID" id="44128031"/>
<dbReference type="KEGG" id="sso:SSO2303"/>
<dbReference type="PATRIC" id="fig|273057.12.peg.2393"/>
<dbReference type="eggNOG" id="arCOG00977">
    <property type="taxonomic scope" value="Archaea"/>
</dbReference>
<dbReference type="HOGENOM" id="CLU_094143_0_0_2"/>
<dbReference type="InParanoid" id="Q97WC7"/>
<dbReference type="PhylomeDB" id="Q97WC7"/>
<dbReference type="UniPathway" id="UPA00148">
    <property type="reaction ID" value="UER00229"/>
</dbReference>
<dbReference type="Proteomes" id="UP000001974">
    <property type="component" value="Chromosome"/>
</dbReference>
<dbReference type="GO" id="GO:0043776">
    <property type="term" value="F:cobalt-precorrin-6B C5-methyltransferase activity"/>
    <property type="evidence" value="ECO:0007669"/>
    <property type="project" value="RHEA"/>
</dbReference>
<dbReference type="GO" id="GO:0008276">
    <property type="term" value="F:protein methyltransferase activity"/>
    <property type="evidence" value="ECO:0007669"/>
    <property type="project" value="InterPro"/>
</dbReference>
<dbReference type="GO" id="GO:0019251">
    <property type="term" value="P:anaerobic cobalamin biosynthetic process"/>
    <property type="evidence" value="ECO:0007669"/>
    <property type="project" value="UniProtKB-UniRule"/>
</dbReference>
<dbReference type="GO" id="GO:0032259">
    <property type="term" value="P:methylation"/>
    <property type="evidence" value="ECO:0007669"/>
    <property type="project" value="UniProtKB-KW"/>
</dbReference>
<dbReference type="CDD" id="cd02440">
    <property type="entry name" value="AdoMet_MTases"/>
    <property type="match status" value="1"/>
</dbReference>
<dbReference type="Gene3D" id="3.40.50.150">
    <property type="entry name" value="Vaccinia Virus protein VP39"/>
    <property type="match status" value="1"/>
</dbReference>
<dbReference type="HAMAP" id="MF_00786">
    <property type="entry name" value="CbiT"/>
    <property type="match status" value="1"/>
</dbReference>
<dbReference type="InterPro" id="IPR023475">
    <property type="entry name" value="CbiT"/>
</dbReference>
<dbReference type="InterPro" id="IPR014008">
    <property type="entry name" value="Cbl_synth_MTase_CbiT"/>
</dbReference>
<dbReference type="InterPro" id="IPR050714">
    <property type="entry name" value="Cobalamin_biosynth_MTase"/>
</dbReference>
<dbReference type="InterPro" id="IPR025714">
    <property type="entry name" value="Methyltranfer_dom"/>
</dbReference>
<dbReference type="InterPro" id="IPR029063">
    <property type="entry name" value="SAM-dependent_MTases_sf"/>
</dbReference>
<dbReference type="NCBIfam" id="TIGR02469">
    <property type="entry name" value="CbiT"/>
    <property type="match status" value="1"/>
</dbReference>
<dbReference type="NCBIfam" id="NF001556">
    <property type="entry name" value="PRK00377.1"/>
    <property type="match status" value="1"/>
</dbReference>
<dbReference type="PANTHER" id="PTHR43182">
    <property type="entry name" value="COBALT-PRECORRIN-6B C(15)-METHYLTRANSFERASE (DECARBOXYLATING)"/>
    <property type="match status" value="1"/>
</dbReference>
<dbReference type="PANTHER" id="PTHR43182:SF1">
    <property type="entry name" value="COBALT-PRECORRIN-7 C(5)-METHYLTRANSFERASE"/>
    <property type="match status" value="1"/>
</dbReference>
<dbReference type="Pfam" id="PF13847">
    <property type="entry name" value="Methyltransf_31"/>
    <property type="match status" value="1"/>
</dbReference>
<dbReference type="SUPFAM" id="SSF53335">
    <property type="entry name" value="S-adenosyl-L-methionine-dependent methyltransferases"/>
    <property type="match status" value="1"/>
</dbReference>
<keyword id="KW-0169">Cobalamin biosynthesis</keyword>
<keyword id="KW-0489">Methyltransferase</keyword>
<keyword id="KW-1185">Reference proteome</keyword>
<keyword id="KW-0949">S-adenosyl-L-methionine</keyword>
<keyword id="KW-0808">Transferase</keyword>
<protein>
    <recommendedName>
        <fullName evidence="1">Probable cobalt-precorrin-6B C(15)-methyltransferase (decarboxylating)</fullName>
        <ecNumber evidence="1">2.1.1.196</ecNumber>
    </recommendedName>
</protein>
<comment type="function">
    <text evidence="1">Catalyzes the methylation of C-15 in cobalt-precorrin-6B followed by the decarboxylation of C-12 to form cobalt-precorrin-7.</text>
</comment>
<comment type="catalytic activity">
    <reaction evidence="1">
        <text>Co-precorrin-6B + S-adenosyl-L-methionine = Co-precorrin-7 + S-adenosyl-L-homocysteine + CO2</text>
        <dbReference type="Rhea" id="RHEA:36067"/>
        <dbReference type="ChEBI" id="CHEBI:16526"/>
        <dbReference type="ChEBI" id="CHEBI:57856"/>
        <dbReference type="ChEBI" id="CHEBI:59789"/>
        <dbReference type="ChEBI" id="CHEBI:70791"/>
        <dbReference type="ChEBI" id="CHEBI:72780"/>
        <dbReference type="EC" id="2.1.1.196"/>
    </reaction>
</comment>
<comment type="pathway">
    <text evidence="1">Cofactor biosynthesis; adenosylcobalamin biosynthesis; cob(II)yrinate a,c-diamide from sirohydrochlorin (anaerobic route): step 8/10.</text>
</comment>
<comment type="similarity">
    <text evidence="1">Belongs to the methyltransferase superfamily. Archaeal-type CbiT family.</text>
</comment>
<sequence>MEWNYVIPGIPDNLFERDEEIPMTKEEIRALALSKLRIKKGDKVLDIGCGTGSITVEASLLVGNSGRVYGIDKEEKAINLTRRNAEKFGVLNNIVLIKGEAPAILSTINEKFDRIFIGGGSEKIKEIISASWEIINKGGRIVIDAILLETVNNALSAMEKIGFVNLEITEVIIAKGMKTKVGTAMMARNPIFIISGEKP</sequence>